<gene>
    <name evidence="1" type="primary">metN2</name>
    <name type="ordered locus">PP_0220</name>
</gene>
<reference key="1">
    <citation type="journal article" date="2002" name="Environ. Microbiol.">
        <title>Complete genome sequence and comparative analysis of the metabolically versatile Pseudomonas putida KT2440.</title>
        <authorList>
            <person name="Nelson K.E."/>
            <person name="Weinel C."/>
            <person name="Paulsen I.T."/>
            <person name="Dodson R.J."/>
            <person name="Hilbert H."/>
            <person name="Martins dos Santos V.A.P."/>
            <person name="Fouts D.E."/>
            <person name="Gill S.R."/>
            <person name="Pop M."/>
            <person name="Holmes M."/>
            <person name="Brinkac L.M."/>
            <person name="Beanan M.J."/>
            <person name="DeBoy R.T."/>
            <person name="Daugherty S.C."/>
            <person name="Kolonay J.F."/>
            <person name="Madupu R."/>
            <person name="Nelson W.C."/>
            <person name="White O."/>
            <person name="Peterson J.D."/>
            <person name="Khouri H.M."/>
            <person name="Hance I."/>
            <person name="Chris Lee P."/>
            <person name="Holtzapple E.K."/>
            <person name="Scanlan D."/>
            <person name="Tran K."/>
            <person name="Moazzez A."/>
            <person name="Utterback T.R."/>
            <person name="Rizzo M."/>
            <person name="Lee K."/>
            <person name="Kosack D."/>
            <person name="Moestl D."/>
            <person name="Wedler H."/>
            <person name="Lauber J."/>
            <person name="Stjepandic D."/>
            <person name="Hoheisel J."/>
            <person name="Straetz M."/>
            <person name="Heim S."/>
            <person name="Kiewitz C."/>
            <person name="Eisen J.A."/>
            <person name="Timmis K.N."/>
            <person name="Duesterhoeft A."/>
            <person name="Tuemmler B."/>
            <person name="Fraser C.M."/>
        </authorList>
    </citation>
    <scope>NUCLEOTIDE SEQUENCE [LARGE SCALE GENOMIC DNA]</scope>
    <source>
        <strain>ATCC 47054 / DSM 6125 / CFBP 8728 / NCIMB 11950 / KT2440</strain>
    </source>
</reference>
<protein>
    <recommendedName>
        <fullName evidence="1">Methionine import ATP-binding protein MetN 2</fullName>
        <ecNumber evidence="1">7.4.2.11</ecNumber>
    </recommendedName>
</protein>
<organism>
    <name type="scientific">Pseudomonas putida (strain ATCC 47054 / DSM 6125 / CFBP 8728 / NCIMB 11950 / KT2440)</name>
    <dbReference type="NCBI Taxonomy" id="160488"/>
    <lineage>
        <taxon>Bacteria</taxon>
        <taxon>Pseudomonadati</taxon>
        <taxon>Pseudomonadota</taxon>
        <taxon>Gammaproteobacteria</taxon>
        <taxon>Pseudomonadales</taxon>
        <taxon>Pseudomonadaceae</taxon>
        <taxon>Pseudomonas</taxon>
    </lineage>
</organism>
<name>METN2_PSEPK</name>
<feature type="chain" id="PRO_0000270353" description="Methionine import ATP-binding protein MetN 2">
    <location>
        <begin position="1"/>
        <end position="369"/>
    </location>
</feature>
<feature type="domain" description="ABC transporter" evidence="1">
    <location>
        <begin position="33"/>
        <end position="270"/>
    </location>
</feature>
<feature type="binding site" evidence="1">
    <location>
        <begin position="67"/>
        <end position="74"/>
    </location>
    <ligand>
        <name>ATP</name>
        <dbReference type="ChEBI" id="CHEBI:30616"/>
    </ligand>
</feature>
<evidence type="ECO:0000255" key="1">
    <source>
        <dbReference type="HAMAP-Rule" id="MF_01719"/>
    </source>
</evidence>
<proteinExistence type="inferred from homology"/>
<comment type="function">
    <text evidence="1">Part of the ABC transporter complex MetNIQ involved in methionine import. Responsible for energy coupling to the transport system.</text>
</comment>
<comment type="catalytic activity">
    <reaction evidence="1">
        <text>L-methionine(out) + ATP + H2O = L-methionine(in) + ADP + phosphate + H(+)</text>
        <dbReference type="Rhea" id="RHEA:29779"/>
        <dbReference type="ChEBI" id="CHEBI:15377"/>
        <dbReference type="ChEBI" id="CHEBI:15378"/>
        <dbReference type="ChEBI" id="CHEBI:30616"/>
        <dbReference type="ChEBI" id="CHEBI:43474"/>
        <dbReference type="ChEBI" id="CHEBI:57844"/>
        <dbReference type="ChEBI" id="CHEBI:456216"/>
        <dbReference type="EC" id="7.4.2.11"/>
    </reaction>
</comment>
<comment type="catalytic activity">
    <reaction evidence="1">
        <text>D-methionine(out) + ATP + H2O = D-methionine(in) + ADP + phosphate + H(+)</text>
        <dbReference type="Rhea" id="RHEA:29767"/>
        <dbReference type="ChEBI" id="CHEBI:15377"/>
        <dbReference type="ChEBI" id="CHEBI:15378"/>
        <dbReference type="ChEBI" id="CHEBI:30616"/>
        <dbReference type="ChEBI" id="CHEBI:43474"/>
        <dbReference type="ChEBI" id="CHEBI:57932"/>
        <dbReference type="ChEBI" id="CHEBI:456216"/>
        <dbReference type="EC" id="7.4.2.11"/>
    </reaction>
</comment>
<comment type="subunit">
    <text evidence="1">The complex is composed of two ATP-binding proteins (MetN), two transmembrane proteins (MetI) and a solute-binding protein (MetQ).</text>
</comment>
<comment type="subcellular location">
    <subcellularLocation>
        <location evidence="1">Cell inner membrane</location>
        <topology evidence="1">Peripheral membrane protein</topology>
    </subcellularLocation>
</comment>
<comment type="similarity">
    <text evidence="1">Belongs to the ABC transporter superfamily. Methionine importer (TC 3.A.1.24) family.</text>
</comment>
<keyword id="KW-0029">Amino-acid transport</keyword>
<keyword id="KW-0067">ATP-binding</keyword>
<keyword id="KW-0997">Cell inner membrane</keyword>
<keyword id="KW-1003">Cell membrane</keyword>
<keyword id="KW-0472">Membrane</keyword>
<keyword id="KW-0547">Nucleotide-binding</keyword>
<keyword id="KW-1185">Reference proteome</keyword>
<keyword id="KW-1278">Translocase</keyword>
<keyword id="KW-0813">Transport</keyword>
<sequence>MSQASALRAPTPQALPPMAREQALRPDVNEAHVRFIGLGKTYPGQAQPALQGIDLNIRHGEIFGIIGRSGAGKSSLLRTINRLEQPSQGRVLIDQVDIAPFNEDQLVALRRRIGMIFQHFNLMSAKTVWQNVELPLKVAGVAKAERQRKVRELLELVGLQEKHHVYPAQLSGGQKQRVGIARALVHTPEILLCDEATSALDPETTASILELLRDINQRLGLTIVLITHEMAVIRDICHRVVVLERGAVVEQGEVWRVFGSPRHEVTRTLLAPLQAKLPAALQASLQAHPASGNSAVVLKLTVLGEPELSALFNDLGGRVRLLQGGVETIGEHALGQLILSVQHSPHDTHQLLERARRWAEDVEVLGHVD</sequence>
<accession>Q88RB3</accession>
<dbReference type="EC" id="7.4.2.11" evidence="1"/>
<dbReference type="EMBL" id="AE015451">
    <property type="protein sequence ID" value="AAN65852.1"/>
    <property type="molecule type" value="Genomic_DNA"/>
</dbReference>
<dbReference type="RefSeq" id="NP_742388.1">
    <property type="nucleotide sequence ID" value="NC_002947.4"/>
</dbReference>
<dbReference type="RefSeq" id="WP_010951602.1">
    <property type="nucleotide sequence ID" value="NZ_CP169744.1"/>
</dbReference>
<dbReference type="SMR" id="Q88RB3"/>
<dbReference type="STRING" id="160488.PP_0220"/>
<dbReference type="PaxDb" id="160488-PP_0220"/>
<dbReference type="KEGG" id="ppu:PP_0220"/>
<dbReference type="PATRIC" id="fig|160488.4.peg.235"/>
<dbReference type="eggNOG" id="COG1135">
    <property type="taxonomic scope" value="Bacteria"/>
</dbReference>
<dbReference type="HOGENOM" id="CLU_000604_1_3_6"/>
<dbReference type="OrthoDB" id="9802264at2"/>
<dbReference type="PhylomeDB" id="Q88RB3"/>
<dbReference type="BioCyc" id="PPUT160488:G1G01-242-MONOMER"/>
<dbReference type="Proteomes" id="UP000000556">
    <property type="component" value="Chromosome"/>
</dbReference>
<dbReference type="GO" id="GO:0005886">
    <property type="term" value="C:plasma membrane"/>
    <property type="evidence" value="ECO:0007669"/>
    <property type="project" value="UniProtKB-SubCell"/>
</dbReference>
<dbReference type="GO" id="GO:0033232">
    <property type="term" value="F:ABC-type D-methionine transporter activity"/>
    <property type="evidence" value="ECO:0007669"/>
    <property type="project" value="UniProtKB-EC"/>
</dbReference>
<dbReference type="GO" id="GO:0005524">
    <property type="term" value="F:ATP binding"/>
    <property type="evidence" value="ECO:0007669"/>
    <property type="project" value="UniProtKB-KW"/>
</dbReference>
<dbReference type="GO" id="GO:0016887">
    <property type="term" value="F:ATP hydrolysis activity"/>
    <property type="evidence" value="ECO:0007669"/>
    <property type="project" value="InterPro"/>
</dbReference>
<dbReference type="CDD" id="cd03258">
    <property type="entry name" value="ABC_MetN_methionine_transporter"/>
    <property type="match status" value="1"/>
</dbReference>
<dbReference type="FunFam" id="3.40.50.300:FF:000056">
    <property type="entry name" value="Cell division ATP-binding protein FtsE"/>
    <property type="match status" value="1"/>
</dbReference>
<dbReference type="Gene3D" id="3.30.70.260">
    <property type="match status" value="1"/>
</dbReference>
<dbReference type="Gene3D" id="3.40.50.300">
    <property type="entry name" value="P-loop containing nucleotide triphosphate hydrolases"/>
    <property type="match status" value="1"/>
</dbReference>
<dbReference type="InterPro" id="IPR003593">
    <property type="entry name" value="AAA+_ATPase"/>
</dbReference>
<dbReference type="InterPro" id="IPR003439">
    <property type="entry name" value="ABC_transporter-like_ATP-bd"/>
</dbReference>
<dbReference type="InterPro" id="IPR017871">
    <property type="entry name" value="ABC_transporter-like_CS"/>
</dbReference>
<dbReference type="InterPro" id="IPR045865">
    <property type="entry name" value="ACT-like_dom_sf"/>
</dbReference>
<dbReference type="InterPro" id="IPR041701">
    <property type="entry name" value="MetN_ABC"/>
</dbReference>
<dbReference type="InterPro" id="IPR050086">
    <property type="entry name" value="MetN_ABC_transporter-like"/>
</dbReference>
<dbReference type="InterPro" id="IPR018449">
    <property type="entry name" value="NIL_domain"/>
</dbReference>
<dbReference type="InterPro" id="IPR027417">
    <property type="entry name" value="P-loop_NTPase"/>
</dbReference>
<dbReference type="PANTHER" id="PTHR43166">
    <property type="entry name" value="AMINO ACID IMPORT ATP-BINDING PROTEIN"/>
    <property type="match status" value="1"/>
</dbReference>
<dbReference type="PANTHER" id="PTHR43166:SF30">
    <property type="entry name" value="METHIONINE IMPORT ATP-BINDING PROTEIN METN"/>
    <property type="match status" value="1"/>
</dbReference>
<dbReference type="Pfam" id="PF00005">
    <property type="entry name" value="ABC_tran"/>
    <property type="match status" value="1"/>
</dbReference>
<dbReference type="Pfam" id="PF09383">
    <property type="entry name" value="NIL"/>
    <property type="match status" value="1"/>
</dbReference>
<dbReference type="SMART" id="SM00382">
    <property type="entry name" value="AAA"/>
    <property type="match status" value="1"/>
</dbReference>
<dbReference type="SMART" id="SM00930">
    <property type="entry name" value="NIL"/>
    <property type="match status" value="1"/>
</dbReference>
<dbReference type="SUPFAM" id="SSF55021">
    <property type="entry name" value="ACT-like"/>
    <property type="match status" value="1"/>
</dbReference>
<dbReference type="SUPFAM" id="SSF52540">
    <property type="entry name" value="P-loop containing nucleoside triphosphate hydrolases"/>
    <property type="match status" value="1"/>
</dbReference>
<dbReference type="PROSITE" id="PS00211">
    <property type="entry name" value="ABC_TRANSPORTER_1"/>
    <property type="match status" value="1"/>
</dbReference>
<dbReference type="PROSITE" id="PS50893">
    <property type="entry name" value="ABC_TRANSPORTER_2"/>
    <property type="match status" value="1"/>
</dbReference>
<dbReference type="PROSITE" id="PS51264">
    <property type="entry name" value="METN"/>
    <property type="match status" value="1"/>
</dbReference>